<feature type="chain" id="PRO_0000146830" description="Pyruvate carboxylase subunit B">
    <location>
        <begin position="1"/>
        <end position="567"/>
    </location>
</feature>
<feature type="domain" description="Pyruvate carboxyltransferase" evidence="3">
    <location>
        <begin position="2"/>
        <end position="262"/>
    </location>
</feature>
<feature type="domain" description="Biotinyl-binding" evidence="2">
    <location>
        <begin position="492"/>
        <end position="567"/>
    </location>
</feature>
<feature type="binding site" evidence="1">
    <location>
        <begin position="10"/>
        <end position="14"/>
    </location>
    <ligand>
        <name>substrate</name>
    </ligand>
</feature>
<feature type="binding site" evidence="1">
    <location>
        <position position="11"/>
    </location>
    <ligand>
        <name>a divalent metal cation</name>
        <dbReference type="ChEBI" id="CHEBI:60240"/>
    </ligand>
</feature>
<feature type="binding site" evidence="1">
    <location>
        <position position="81"/>
    </location>
    <ligand>
        <name>substrate</name>
    </ligand>
</feature>
<feature type="binding site" description="via carbamate group" evidence="1">
    <location>
        <position position="172"/>
    </location>
    <ligand>
        <name>a divalent metal cation</name>
        <dbReference type="ChEBI" id="CHEBI:60240"/>
    </ligand>
</feature>
<feature type="binding site" evidence="1">
    <location>
        <position position="201"/>
    </location>
    <ligand>
        <name>a divalent metal cation</name>
        <dbReference type="ChEBI" id="CHEBI:60240"/>
    </ligand>
</feature>
<feature type="binding site" evidence="1">
    <location>
        <position position="203"/>
    </location>
    <ligand>
        <name>a divalent metal cation</name>
        <dbReference type="ChEBI" id="CHEBI:60240"/>
    </ligand>
</feature>
<feature type="binding site" evidence="1">
    <location>
        <position position="337"/>
    </location>
    <ligand>
        <name>substrate</name>
    </ligand>
</feature>
<feature type="modified residue" description="N6-carboxylysine" evidence="1">
    <location>
        <position position="172"/>
    </location>
</feature>
<feature type="modified residue" description="N6-biotinyllysine" evidence="1 2">
    <location>
        <position position="533"/>
    </location>
</feature>
<comment type="function">
    <text evidence="4">Pyruvate carboxylase catalyzes a 2-step reaction, involving the ATP-dependent carboxylation of the covalently attached biotin in the first step and the transfer of the carboxyl group to pyruvate in the second.</text>
</comment>
<comment type="catalytic activity">
    <reaction>
        <text>hydrogencarbonate + pyruvate + ATP = oxaloacetate + ADP + phosphate + H(+)</text>
        <dbReference type="Rhea" id="RHEA:20844"/>
        <dbReference type="ChEBI" id="CHEBI:15361"/>
        <dbReference type="ChEBI" id="CHEBI:15378"/>
        <dbReference type="ChEBI" id="CHEBI:16452"/>
        <dbReference type="ChEBI" id="CHEBI:17544"/>
        <dbReference type="ChEBI" id="CHEBI:30616"/>
        <dbReference type="ChEBI" id="CHEBI:43474"/>
        <dbReference type="ChEBI" id="CHEBI:456216"/>
        <dbReference type="EC" id="6.4.1.1"/>
    </reaction>
</comment>
<comment type="cofactor">
    <cofactor>
        <name>Mg(2+)</name>
        <dbReference type="ChEBI" id="CHEBI:18420"/>
    </cofactor>
    <cofactor>
        <name>Mn(2+)</name>
        <dbReference type="ChEBI" id="CHEBI:29035"/>
    </cofactor>
    <cofactor>
        <name>Co(2+)</name>
        <dbReference type="ChEBI" id="CHEBI:48828"/>
    </cofactor>
</comment>
<comment type="activity regulation">
    <text>Inhibited by magnesium, when its concentration exceeded the ATP one, and by high concentration of ATP and alpha-ketoglutarate.</text>
</comment>
<comment type="biophysicochemical properties">
    <phDependence>
        <text>Optimum pH is 8.5.</text>
    </phDependence>
    <temperatureDependence>
        <text>Optimum temperature is 80-90 degrees Celsius.</text>
    </temperatureDependence>
</comment>
<comment type="pathway">
    <text>Carbohydrate biosynthesis; gluconeogenesis.</text>
</comment>
<comment type="subunit">
    <text>Heterooctamer of four A and four B subunits.</text>
</comment>
<comment type="mass spectrometry"/>
<evidence type="ECO:0000250" key="1"/>
<evidence type="ECO:0000255" key="2">
    <source>
        <dbReference type="PROSITE-ProRule" id="PRU01066"/>
    </source>
</evidence>
<evidence type="ECO:0000255" key="3">
    <source>
        <dbReference type="PROSITE-ProRule" id="PRU01151"/>
    </source>
</evidence>
<evidence type="ECO:0000269" key="4">
    <source>
    </source>
</evidence>
<name>PYCB_METJA</name>
<keyword id="KW-0067">ATP-binding</keyword>
<keyword id="KW-0092">Biotin</keyword>
<keyword id="KW-0903">Direct protein sequencing</keyword>
<keyword id="KW-0312">Gluconeogenesis</keyword>
<keyword id="KW-0436">Ligase</keyword>
<keyword id="KW-0460">Magnesium</keyword>
<keyword id="KW-0479">Metal-binding</keyword>
<keyword id="KW-0511">Multifunctional enzyme</keyword>
<keyword id="KW-0547">Nucleotide-binding</keyword>
<keyword id="KW-0670">Pyruvate</keyword>
<keyword id="KW-1185">Reference proteome</keyword>
<proteinExistence type="evidence at protein level"/>
<dbReference type="EC" id="6.4.1.1"/>
<dbReference type="EMBL" id="L77117">
    <property type="protein sequence ID" value="AAB99233.1"/>
    <property type="molecule type" value="Genomic_DNA"/>
</dbReference>
<dbReference type="PIR" id="F64453">
    <property type="entry name" value="F64453"/>
</dbReference>
<dbReference type="RefSeq" id="WP_010870743.1">
    <property type="nucleotide sequence ID" value="NC_000909.1"/>
</dbReference>
<dbReference type="SMR" id="Q58628"/>
<dbReference type="FunCoup" id="Q58628">
    <property type="interactions" value="159"/>
</dbReference>
<dbReference type="STRING" id="243232.MJ_1231"/>
<dbReference type="PaxDb" id="243232-MJ_1231"/>
<dbReference type="EnsemblBacteria" id="AAB99233">
    <property type="protein sequence ID" value="AAB99233"/>
    <property type="gene ID" value="MJ_1231"/>
</dbReference>
<dbReference type="GeneID" id="1452127"/>
<dbReference type="KEGG" id="mja:MJ_1231"/>
<dbReference type="eggNOG" id="arCOG02095">
    <property type="taxonomic scope" value="Archaea"/>
</dbReference>
<dbReference type="HOGENOM" id="CLU_000395_4_2_2"/>
<dbReference type="InParanoid" id="Q58628"/>
<dbReference type="OrthoDB" id="6555at2157"/>
<dbReference type="PhylomeDB" id="Q58628"/>
<dbReference type="UniPathway" id="UPA00138"/>
<dbReference type="Proteomes" id="UP000000805">
    <property type="component" value="Chromosome"/>
</dbReference>
<dbReference type="GO" id="GO:0005524">
    <property type="term" value="F:ATP binding"/>
    <property type="evidence" value="ECO:0007669"/>
    <property type="project" value="UniProtKB-KW"/>
</dbReference>
<dbReference type="GO" id="GO:0046872">
    <property type="term" value="F:metal ion binding"/>
    <property type="evidence" value="ECO:0007669"/>
    <property type="project" value="UniProtKB-KW"/>
</dbReference>
<dbReference type="GO" id="GO:0008948">
    <property type="term" value="F:oxaloacetate decarboxylase activity"/>
    <property type="evidence" value="ECO:0007669"/>
    <property type="project" value="InterPro"/>
</dbReference>
<dbReference type="GO" id="GO:0004736">
    <property type="term" value="F:pyruvate carboxylase activity"/>
    <property type="evidence" value="ECO:0007669"/>
    <property type="project" value="UniProtKB-EC"/>
</dbReference>
<dbReference type="GO" id="GO:0006094">
    <property type="term" value="P:gluconeogenesis"/>
    <property type="evidence" value="ECO:0007669"/>
    <property type="project" value="UniProtKB-UniPathway"/>
</dbReference>
<dbReference type="GO" id="GO:0006814">
    <property type="term" value="P:sodium ion transport"/>
    <property type="evidence" value="ECO:0007669"/>
    <property type="project" value="InterPro"/>
</dbReference>
<dbReference type="CDD" id="cd06850">
    <property type="entry name" value="biotinyl_domain"/>
    <property type="match status" value="1"/>
</dbReference>
<dbReference type="CDD" id="cd07937">
    <property type="entry name" value="DRE_TIM_PC_TC_5S"/>
    <property type="match status" value="1"/>
</dbReference>
<dbReference type="FunFam" id="2.40.50.100:FF:000003">
    <property type="entry name" value="Acetyl-CoA carboxylase biotin carboxyl carrier protein"/>
    <property type="match status" value="1"/>
</dbReference>
<dbReference type="Gene3D" id="2.40.50.100">
    <property type="match status" value="1"/>
</dbReference>
<dbReference type="Gene3D" id="3.20.20.70">
    <property type="entry name" value="Aldolase class I"/>
    <property type="match status" value="1"/>
</dbReference>
<dbReference type="InterPro" id="IPR013785">
    <property type="entry name" value="Aldolase_TIM"/>
</dbReference>
<dbReference type="InterPro" id="IPR001882">
    <property type="entry name" value="Biotin_BS"/>
</dbReference>
<dbReference type="InterPro" id="IPR000089">
    <property type="entry name" value="Biotin_lipoyl"/>
</dbReference>
<dbReference type="InterPro" id="IPR003379">
    <property type="entry name" value="Carboxylase_cons_dom"/>
</dbReference>
<dbReference type="InterPro" id="IPR005776">
    <property type="entry name" value="OadA"/>
</dbReference>
<dbReference type="InterPro" id="IPR055268">
    <property type="entry name" value="PCB-like"/>
</dbReference>
<dbReference type="InterPro" id="IPR000891">
    <property type="entry name" value="PYR_CT"/>
</dbReference>
<dbReference type="InterPro" id="IPR011053">
    <property type="entry name" value="Single_hybrid_motif"/>
</dbReference>
<dbReference type="NCBIfam" id="TIGR01108">
    <property type="entry name" value="oadA"/>
    <property type="match status" value="1"/>
</dbReference>
<dbReference type="NCBIfam" id="NF006761">
    <property type="entry name" value="PRK09282.1"/>
    <property type="match status" value="1"/>
</dbReference>
<dbReference type="NCBIfam" id="NF008985">
    <property type="entry name" value="PRK12331.1"/>
    <property type="match status" value="1"/>
</dbReference>
<dbReference type="NCBIfam" id="NF010644">
    <property type="entry name" value="PRK14041.1"/>
    <property type="match status" value="1"/>
</dbReference>
<dbReference type="PANTHER" id="PTHR43778">
    <property type="entry name" value="PYRUVATE CARBOXYLASE"/>
    <property type="match status" value="1"/>
</dbReference>
<dbReference type="PANTHER" id="PTHR43778:SF2">
    <property type="entry name" value="PYRUVATE CARBOXYLASE, MITOCHONDRIAL"/>
    <property type="match status" value="1"/>
</dbReference>
<dbReference type="Pfam" id="PF00364">
    <property type="entry name" value="Biotin_lipoyl"/>
    <property type="match status" value="1"/>
</dbReference>
<dbReference type="Pfam" id="PF00682">
    <property type="entry name" value="HMGL-like"/>
    <property type="match status" value="1"/>
</dbReference>
<dbReference type="Pfam" id="PF02436">
    <property type="entry name" value="PYC_OADA"/>
    <property type="match status" value="1"/>
</dbReference>
<dbReference type="SUPFAM" id="SSF51569">
    <property type="entry name" value="Aldolase"/>
    <property type="match status" value="1"/>
</dbReference>
<dbReference type="SUPFAM" id="SSF89000">
    <property type="entry name" value="post-HMGL domain-like"/>
    <property type="match status" value="1"/>
</dbReference>
<dbReference type="SUPFAM" id="SSF51230">
    <property type="entry name" value="Single hybrid motif"/>
    <property type="match status" value="1"/>
</dbReference>
<dbReference type="PROSITE" id="PS00188">
    <property type="entry name" value="BIOTIN"/>
    <property type="match status" value="1"/>
</dbReference>
<dbReference type="PROSITE" id="PS50968">
    <property type="entry name" value="BIOTINYL_LIPOYL"/>
    <property type="match status" value="1"/>
</dbReference>
<dbReference type="PROSITE" id="PS50991">
    <property type="entry name" value="PYR_CT"/>
    <property type="match status" value="1"/>
</dbReference>
<sequence>MVKIVDTTFRDAQQSLIATRMRTEDMLPIAEKMDEVGFYSMEVWGGATFDACIRYLNEDPWERLRALKKRIQNTPLQMLLRGQNLVGYRHYPDDIVEKFVIKAHENGIDIFRIFDALNDVRNMETAIKTAKKVGAEVQGAICYTISPVHTIDQYVELAKKLEEMGCDSICIKDMAGLLTPYEGYELVKRLKEEISLPIDVHSHCTSGLAPMTYLKVIEAGADMVDCAISPFAMGTSQPPTESIVVALKGTKYDTGLDLKLLNEIRDYFMKVREKYKMLFSPISQIVDARVLVYQVPGGMLSNLVSQLKEQGALDKFEEVLQEIPRVRKDLGYPPLVTPTSQIVGTQAVLNVLTEERYKIITNEVVNYVKGFYGKPPAPINPELLKRVLDEGEKPITCRPADLLPPEWEKVKKEAEEKGIVKKEEDILTYALYPQIAVKFLRGELKAEPIPKEKDIGKILEIPTEYIVEVDGEKFEVKIEPKIGTELKRKKEVITAEMEGAVTSPFRGMVTKIKVKEGDKVKKGDVIVVLEAMKMEHPIESPVEGTVERILIDEGDAVNVGDVIMIIK</sequence>
<protein>
    <recommendedName>
        <fullName>Pyruvate carboxylase subunit B</fullName>
        <ecNumber>6.4.1.1</ecNumber>
    </recommendedName>
    <alternativeName>
        <fullName>Pyruvic carboxylase B</fullName>
    </alternativeName>
</protein>
<gene>
    <name type="primary">pycB</name>
    <name type="ordered locus">MJ1231</name>
</gene>
<accession>Q58628</accession>
<organism>
    <name type="scientific">Methanocaldococcus jannaschii (strain ATCC 43067 / DSM 2661 / JAL-1 / JCM 10045 / NBRC 100440)</name>
    <name type="common">Methanococcus jannaschii</name>
    <dbReference type="NCBI Taxonomy" id="243232"/>
    <lineage>
        <taxon>Archaea</taxon>
        <taxon>Methanobacteriati</taxon>
        <taxon>Methanobacteriota</taxon>
        <taxon>Methanomada group</taxon>
        <taxon>Methanococci</taxon>
        <taxon>Methanococcales</taxon>
        <taxon>Methanocaldococcaceae</taxon>
        <taxon>Methanocaldococcus</taxon>
    </lineage>
</organism>
<reference key="1">
    <citation type="journal article" date="1996" name="Science">
        <title>Complete genome sequence of the methanogenic archaeon, Methanococcus jannaschii.</title>
        <authorList>
            <person name="Bult C.J."/>
            <person name="White O."/>
            <person name="Olsen G.J."/>
            <person name="Zhou L."/>
            <person name="Fleischmann R.D."/>
            <person name="Sutton G.G."/>
            <person name="Blake J.A."/>
            <person name="FitzGerald L.M."/>
            <person name="Clayton R.A."/>
            <person name="Gocayne J.D."/>
            <person name="Kerlavage A.R."/>
            <person name="Dougherty B.A."/>
            <person name="Tomb J.-F."/>
            <person name="Adams M.D."/>
            <person name="Reich C.I."/>
            <person name="Overbeek R."/>
            <person name="Kirkness E.F."/>
            <person name="Weinstock K.G."/>
            <person name="Merrick J.M."/>
            <person name="Glodek A."/>
            <person name="Scott J.L."/>
            <person name="Geoghagen N.S.M."/>
            <person name="Weidman J.F."/>
            <person name="Fuhrmann J.L."/>
            <person name="Nguyen D."/>
            <person name="Utterback T.R."/>
            <person name="Kelley J.M."/>
            <person name="Peterson J.D."/>
            <person name="Sadow P.W."/>
            <person name="Hanna M.C."/>
            <person name="Cotton M.D."/>
            <person name="Roberts K.M."/>
            <person name="Hurst M.A."/>
            <person name="Kaine B.P."/>
            <person name="Borodovsky M."/>
            <person name="Klenk H.-P."/>
            <person name="Fraser C.M."/>
            <person name="Smith H.O."/>
            <person name="Woese C.R."/>
            <person name="Venter J.C."/>
        </authorList>
    </citation>
    <scope>NUCLEOTIDE SEQUENCE [LARGE SCALE GENOMIC DNA]</scope>
    <source>
        <strain>ATCC 43067 / DSM 2661 / JAL-1 / JCM 10045 / NBRC 100440</strain>
    </source>
</reference>
<reference key="2">
    <citation type="journal article" date="2000" name="Arch. Microbiol.">
        <title>A stable archaeal pyruvate carboxylase from the hyperthermophile Methanococcus jannaschii.</title>
        <authorList>
            <person name="Mukhopadhyay B."/>
            <person name="Patel V.J."/>
            <person name="Wolfe R.S."/>
        </authorList>
    </citation>
    <scope>PROTEIN SEQUENCE OF 190-195; 260-270; 277-289; 277-289; 309-325; 328-358; 370-380; 386-409; 422-438; 491-506 AND 491-506</scope>
    <scope>FUNCTION</scope>
    <scope>MASS SPECTROMETRY</scope>
</reference>